<name>ATPA_CAMFF</name>
<keyword id="KW-0066">ATP synthesis</keyword>
<keyword id="KW-0067">ATP-binding</keyword>
<keyword id="KW-0997">Cell inner membrane</keyword>
<keyword id="KW-1003">Cell membrane</keyword>
<keyword id="KW-0139">CF(1)</keyword>
<keyword id="KW-0375">Hydrogen ion transport</keyword>
<keyword id="KW-0406">Ion transport</keyword>
<keyword id="KW-0472">Membrane</keyword>
<keyword id="KW-0547">Nucleotide-binding</keyword>
<keyword id="KW-1278">Translocase</keyword>
<keyword id="KW-0813">Transport</keyword>
<reference key="1">
    <citation type="submission" date="2006-11" db="EMBL/GenBank/DDBJ databases">
        <title>Sequence of Campylobacter fetus subsp. fetus 82-40.</title>
        <authorList>
            <person name="Fouts D.E."/>
            <person name="Nelson K.E."/>
        </authorList>
    </citation>
    <scope>NUCLEOTIDE SEQUENCE [LARGE SCALE GENOMIC DNA]</scope>
    <source>
        <strain>82-40</strain>
    </source>
</reference>
<gene>
    <name evidence="1" type="primary">atpA</name>
    <name type="ordered locus">CFF8240_1527</name>
</gene>
<organism>
    <name type="scientific">Campylobacter fetus subsp. fetus (strain 82-40)</name>
    <dbReference type="NCBI Taxonomy" id="360106"/>
    <lineage>
        <taxon>Bacteria</taxon>
        <taxon>Pseudomonadati</taxon>
        <taxon>Campylobacterota</taxon>
        <taxon>Epsilonproteobacteria</taxon>
        <taxon>Campylobacterales</taxon>
        <taxon>Campylobacteraceae</taxon>
        <taxon>Campylobacter</taxon>
    </lineage>
</organism>
<protein>
    <recommendedName>
        <fullName evidence="1">ATP synthase subunit alpha</fullName>
        <ecNumber evidence="1">7.1.2.2</ecNumber>
    </recommendedName>
    <alternativeName>
        <fullName evidence="1">ATP synthase F1 sector subunit alpha</fullName>
    </alternativeName>
    <alternativeName>
        <fullName evidence="1">F-ATPase subunit alpha</fullName>
    </alternativeName>
</protein>
<comment type="function">
    <text evidence="1">Produces ATP from ADP in the presence of a proton gradient across the membrane. The alpha chain is a regulatory subunit.</text>
</comment>
<comment type="catalytic activity">
    <reaction evidence="1">
        <text>ATP + H2O + 4 H(+)(in) = ADP + phosphate + 5 H(+)(out)</text>
        <dbReference type="Rhea" id="RHEA:57720"/>
        <dbReference type="ChEBI" id="CHEBI:15377"/>
        <dbReference type="ChEBI" id="CHEBI:15378"/>
        <dbReference type="ChEBI" id="CHEBI:30616"/>
        <dbReference type="ChEBI" id="CHEBI:43474"/>
        <dbReference type="ChEBI" id="CHEBI:456216"/>
        <dbReference type="EC" id="7.1.2.2"/>
    </reaction>
</comment>
<comment type="subunit">
    <text evidence="1">F-type ATPases have 2 components, CF(1) - the catalytic core - and CF(0) - the membrane proton channel. CF(1) has five subunits: alpha(3), beta(3), gamma(1), delta(1), epsilon(1). CF(0) has three main subunits: a(1), b(2) and c(9-12). The alpha and beta chains form an alternating ring which encloses part of the gamma chain. CF(1) is attached to CF(0) by a central stalk formed by the gamma and epsilon chains, while a peripheral stalk is formed by the delta and b chains.</text>
</comment>
<comment type="subcellular location">
    <subcellularLocation>
        <location evidence="1">Cell inner membrane</location>
        <topology evidence="1">Peripheral membrane protein</topology>
    </subcellularLocation>
</comment>
<comment type="similarity">
    <text evidence="1">Belongs to the ATPase alpha/beta chains family.</text>
</comment>
<evidence type="ECO:0000255" key="1">
    <source>
        <dbReference type="HAMAP-Rule" id="MF_01346"/>
    </source>
</evidence>
<feature type="chain" id="PRO_0000302634" description="ATP synthase subunit alpha">
    <location>
        <begin position="1"/>
        <end position="505"/>
    </location>
</feature>
<feature type="binding site" evidence="1">
    <location>
        <begin position="171"/>
        <end position="178"/>
    </location>
    <ligand>
        <name>ATP</name>
        <dbReference type="ChEBI" id="CHEBI:30616"/>
    </ligand>
</feature>
<feature type="site" description="Required for activity" evidence="1">
    <location>
        <position position="364"/>
    </location>
</feature>
<accession>A0RR28</accession>
<dbReference type="EC" id="7.1.2.2" evidence="1"/>
<dbReference type="EMBL" id="CP000487">
    <property type="protein sequence ID" value="ABK81906.1"/>
    <property type="molecule type" value="Genomic_DNA"/>
</dbReference>
<dbReference type="RefSeq" id="WP_002850542.1">
    <property type="nucleotide sequence ID" value="NC_008599.1"/>
</dbReference>
<dbReference type="SMR" id="A0RR28"/>
<dbReference type="GeneID" id="61065344"/>
<dbReference type="KEGG" id="cff:CFF8240_1527"/>
<dbReference type="eggNOG" id="COG0056">
    <property type="taxonomic scope" value="Bacteria"/>
</dbReference>
<dbReference type="HOGENOM" id="CLU_010091_2_1_7"/>
<dbReference type="Proteomes" id="UP000000760">
    <property type="component" value="Chromosome"/>
</dbReference>
<dbReference type="GO" id="GO:0005886">
    <property type="term" value="C:plasma membrane"/>
    <property type="evidence" value="ECO:0007669"/>
    <property type="project" value="UniProtKB-SubCell"/>
</dbReference>
<dbReference type="GO" id="GO:0045259">
    <property type="term" value="C:proton-transporting ATP synthase complex"/>
    <property type="evidence" value="ECO:0007669"/>
    <property type="project" value="UniProtKB-KW"/>
</dbReference>
<dbReference type="GO" id="GO:0043531">
    <property type="term" value="F:ADP binding"/>
    <property type="evidence" value="ECO:0007669"/>
    <property type="project" value="TreeGrafter"/>
</dbReference>
<dbReference type="GO" id="GO:0005524">
    <property type="term" value="F:ATP binding"/>
    <property type="evidence" value="ECO:0007669"/>
    <property type="project" value="UniProtKB-UniRule"/>
</dbReference>
<dbReference type="GO" id="GO:0046933">
    <property type="term" value="F:proton-transporting ATP synthase activity, rotational mechanism"/>
    <property type="evidence" value="ECO:0007669"/>
    <property type="project" value="UniProtKB-UniRule"/>
</dbReference>
<dbReference type="CDD" id="cd18113">
    <property type="entry name" value="ATP-synt_F1_alpha_C"/>
    <property type="match status" value="1"/>
</dbReference>
<dbReference type="CDD" id="cd18116">
    <property type="entry name" value="ATP-synt_F1_alpha_N"/>
    <property type="match status" value="1"/>
</dbReference>
<dbReference type="CDD" id="cd01132">
    <property type="entry name" value="F1-ATPase_alpha_CD"/>
    <property type="match status" value="1"/>
</dbReference>
<dbReference type="FunFam" id="1.20.150.20:FF:000001">
    <property type="entry name" value="ATP synthase subunit alpha"/>
    <property type="match status" value="1"/>
</dbReference>
<dbReference type="FunFam" id="2.40.30.20:FF:000001">
    <property type="entry name" value="ATP synthase subunit alpha"/>
    <property type="match status" value="1"/>
</dbReference>
<dbReference type="FunFam" id="3.40.50.300:FF:000002">
    <property type="entry name" value="ATP synthase subunit alpha"/>
    <property type="match status" value="1"/>
</dbReference>
<dbReference type="Gene3D" id="2.40.30.20">
    <property type="match status" value="1"/>
</dbReference>
<dbReference type="Gene3D" id="1.20.150.20">
    <property type="entry name" value="ATP synthase alpha/beta chain, C-terminal domain"/>
    <property type="match status" value="1"/>
</dbReference>
<dbReference type="Gene3D" id="3.40.50.300">
    <property type="entry name" value="P-loop containing nucleotide triphosphate hydrolases"/>
    <property type="match status" value="1"/>
</dbReference>
<dbReference type="HAMAP" id="MF_01346">
    <property type="entry name" value="ATP_synth_alpha_bact"/>
    <property type="match status" value="1"/>
</dbReference>
<dbReference type="InterPro" id="IPR023366">
    <property type="entry name" value="ATP_synth_asu-like_sf"/>
</dbReference>
<dbReference type="InterPro" id="IPR000793">
    <property type="entry name" value="ATP_synth_asu_C"/>
</dbReference>
<dbReference type="InterPro" id="IPR038376">
    <property type="entry name" value="ATP_synth_asu_C_sf"/>
</dbReference>
<dbReference type="InterPro" id="IPR033732">
    <property type="entry name" value="ATP_synth_F1_a_nt-bd_dom"/>
</dbReference>
<dbReference type="InterPro" id="IPR005294">
    <property type="entry name" value="ATP_synth_F1_asu"/>
</dbReference>
<dbReference type="InterPro" id="IPR020003">
    <property type="entry name" value="ATPase_a/bsu_AS"/>
</dbReference>
<dbReference type="InterPro" id="IPR004100">
    <property type="entry name" value="ATPase_F1/V1/A1_a/bsu_N"/>
</dbReference>
<dbReference type="InterPro" id="IPR036121">
    <property type="entry name" value="ATPase_F1/V1/A1_a/bsu_N_sf"/>
</dbReference>
<dbReference type="InterPro" id="IPR000194">
    <property type="entry name" value="ATPase_F1/V1/A1_a/bsu_nucl-bd"/>
</dbReference>
<dbReference type="InterPro" id="IPR027417">
    <property type="entry name" value="P-loop_NTPase"/>
</dbReference>
<dbReference type="NCBIfam" id="TIGR00962">
    <property type="entry name" value="atpA"/>
    <property type="match status" value="1"/>
</dbReference>
<dbReference type="NCBIfam" id="NF009884">
    <property type="entry name" value="PRK13343.1"/>
    <property type="match status" value="1"/>
</dbReference>
<dbReference type="PANTHER" id="PTHR48082">
    <property type="entry name" value="ATP SYNTHASE SUBUNIT ALPHA, MITOCHONDRIAL"/>
    <property type="match status" value="1"/>
</dbReference>
<dbReference type="PANTHER" id="PTHR48082:SF2">
    <property type="entry name" value="ATP SYNTHASE SUBUNIT ALPHA, MITOCHONDRIAL"/>
    <property type="match status" value="1"/>
</dbReference>
<dbReference type="Pfam" id="PF00006">
    <property type="entry name" value="ATP-synt_ab"/>
    <property type="match status" value="1"/>
</dbReference>
<dbReference type="Pfam" id="PF00306">
    <property type="entry name" value="ATP-synt_ab_C"/>
    <property type="match status" value="1"/>
</dbReference>
<dbReference type="Pfam" id="PF02874">
    <property type="entry name" value="ATP-synt_ab_N"/>
    <property type="match status" value="1"/>
</dbReference>
<dbReference type="PIRSF" id="PIRSF039088">
    <property type="entry name" value="F_ATPase_subunit_alpha"/>
    <property type="match status" value="1"/>
</dbReference>
<dbReference type="SUPFAM" id="SSF47917">
    <property type="entry name" value="C-terminal domain of alpha and beta subunits of F1 ATP synthase"/>
    <property type="match status" value="1"/>
</dbReference>
<dbReference type="SUPFAM" id="SSF50615">
    <property type="entry name" value="N-terminal domain of alpha and beta subunits of F1 ATP synthase"/>
    <property type="match status" value="1"/>
</dbReference>
<dbReference type="SUPFAM" id="SSF52540">
    <property type="entry name" value="P-loop containing nucleoside triphosphate hydrolases"/>
    <property type="match status" value="1"/>
</dbReference>
<dbReference type="PROSITE" id="PS00152">
    <property type="entry name" value="ATPASE_ALPHA_BETA"/>
    <property type="match status" value="1"/>
</dbReference>
<proteinExistence type="inferred from homology"/>
<sequence length="505" mass="55064">MSVKLKADEISSIIKERIENYNLSVDIEETGKVISVADGVANVYGLKNVMAGEMVEFETGEKGMALNLEESSVGIVVLGKSSSIKEGSSVKRLGKLLRVPVGDALIGRVVNALGEPIDAKGAIEATETRFIEEKAKGIMARKSVHEPLQTGIKAIDGLVPIGRGQRELIIGDRQTGKTTVAIDTIINQKGQDVICIYVAIGQKQSTVAQVVKKLEEYGAMDYTIVVNASASDAPALQYLAPYAGVTMGEYFRDNSRHALIIYDDLSKHAVAYREMSLILRRPPGREAYPGDVFYLHSRLLERASKLSDKLGAGSLTALPIIETQAGDVSAYIPTNVISITDGQIFLESDLFNSGIRPAINVGLSVSRVGGSAQIKAIKKVSGTLRLDLAQYRELQAFAQFASDLDESSRKQLERGQRMVEVLKQPPYSPLPVENQVIIIYAGSQGYLDDIPVSAVTKFEAELYPYIEAKYPEIFEQIRNKKALDKDIEEALSKALNEFKATFSAE</sequence>